<reference key="1">
    <citation type="journal article" date="2006" name="Appl. Environ. Microbiol.">
        <title>Genome sequence of the chemolithoautotrophic nitrite-oxidizing bacterium Nitrobacter winogradskyi Nb-255.</title>
        <authorList>
            <person name="Starkenburg S.R."/>
            <person name="Chain P.S.G."/>
            <person name="Sayavedra-Soto L.A."/>
            <person name="Hauser L."/>
            <person name="Land M.L."/>
            <person name="Larimer F.W."/>
            <person name="Malfatti S.A."/>
            <person name="Klotz M.G."/>
            <person name="Bottomley P.J."/>
            <person name="Arp D.J."/>
            <person name="Hickey W.J."/>
        </authorList>
    </citation>
    <scope>NUCLEOTIDE SEQUENCE [LARGE SCALE GENOMIC DNA]</scope>
    <source>
        <strain>ATCC 25391 / DSM 10237 / CIP 104748 / NCIMB 11846 / Nb-255</strain>
    </source>
</reference>
<sequence>MAEGGVPLEKTAIGTYVPPAKPSLIGLSRAEMAERLAAIGIPREQRRMRVQQLWHWMYVRGARTFAEMTSVSKDMRAELEKHVTLDRPEVVAEQISSDGTRKWLLRLPSGDDLEKPHEVECVYIPETDRGTLCVSSQVGCTLNCSFCHTGTQRLVRNLTAGEIVGQIMVARDRLNDWADRETPHGNRLVTNIVMMGMGEPLYNFDAVRDGLLIVADNEGIGISKRRITLSTSGVVPNIVRAGEEIGVMLAISLHAVRDELRDELVPLNRKYPIAELMQACRDYPAASNAKRITFEYVMLKGVNDSLDDARRLVKLLNGIHAKINLIPFNPWPGTRYECSDWDQIEKFSEYVFNAGYSSPVRTPRGRDILAACGQLKSETEKLSARERQALRAMAMTD</sequence>
<comment type="function">
    <text evidence="1">Specifically methylates position 2 of adenine 2503 in 23S rRNA and position 2 of adenine 37 in tRNAs. m2A2503 modification seems to play a crucial role in the proofreading step occurring at the peptidyl transferase center and thus would serve to optimize ribosomal fidelity.</text>
</comment>
<comment type="catalytic activity">
    <reaction evidence="1">
        <text>adenosine(2503) in 23S rRNA + 2 reduced [2Fe-2S]-[ferredoxin] + 2 S-adenosyl-L-methionine = 2-methyladenosine(2503) in 23S rRNA + 5'-deoxyadenosine + L-methionine + 2 oxidized [2Fe-2S]-[ferredoxin] + S-adenosyl-L-homocysteine</text>
        <dbReference type="Rhea" id="RHEA:42916"/>
        <dbReference type="Rhea" id="RHEA-COMP:10000"/>
        <dbReference type="Rhea" id="RHEA-COMP:10001"/>
        <dbReference type="Rhea" id="RHEA-COMP:10152"/>
        <dbReference type="Rhea" id="RHEA-COMP:10282"/>
        <dbReference type="ChEBI" id="CHEBI:17319"/>
        <dbReference type="ChEBI" id="CHEBI:33737"/>
        <dbReference type="ChEBI" id="CHEBI:33738"/>
        <dbReference type="ChEBI" id="CHEBI:57844"/>
        <dbReference type="ChEBI" id="CHEBI:57856"/>
        <dbReference type="ChEBI" id="CHEBI:59789"/>
        <dbReference type="ChEBI" id="CHEBI:74411"/>
        <dbReference type="ChEBI" id="CHEBI:74497"/>
        <dbReference type="EC" id="2.1.1.192"/>
    </reaction>
</comment>
<comment type="catalytic activity">
    <reaction evidence="1">
        <text>adenosine(37) in tRNA + 2 reduced [2Fe-2S]-[ferredoxin] + 2 S-adenosyl-L-methionine = 2-methyladenosine(37) in tRNA + 5'-deoxyadenosine + L-methionine + 2 oxidized [2Fe-2S]-[ferredoxin] + S-adenosyl-L-homocysteine</text>
        <dbReference type="Rhea" id="RHEA:43332"/>
        <dbReference type="Rhea" id="RHEA-COMP:10000"/>
        <dbReference type="Rhea" id="RHEA-COMP:10001"/>
        <dbReference type="Rhea" id="RHEA-COMP:10162"/>
        <dbReference type="Rhea" id="RHEA-COMP:10485"/>
        <dbReference type="ChEBI" id="CHEBI:17319"/>
        <dbReference type="ChEBI" id="CHEBI:33737"/>
        <dbReference type="ChEBI" id="CHEBI:33738"/>
        <dbReference type="ChEBI" id="CHEBI:57844"/>
        <dbReference type="ChEBI" id="CHEBI:57856"/>
        <dbReference type="ChEBI" id="CHEBI:59789"/>
        <dbReference type="ChEBI" id="CHEBI:74411"/>
        <dbReference type="ChEBI" id="CHEBI:74497"/>
        <dbReference type="EC" id="2.1.1.192"/>
    </reaction>
</comment>
<comment type="cofactor">
    <cofactor evidence="1">
        <name>[4Fe-4S] cluster</name>
        <dbReference type="ChEBI" id="CHEBI:49883"/>
    </cofactor>
    <text evidence="1">Binds 1 [4Fe-4S] cluster. The cluster is coordinated with 3 cysteines and an exchangeable S-adenosyl-L-methionine.</text>
</comment>
<comment type="subcellular location">
    <subcellularLocation>
        <location evidence="1">Cytoplasm</location>
    </subcellularLocation>
</comment>
<comment type="miscellaneous">
    <text evidence="1">Reaction proceeds by a ping-pong mechanism involving intermediate methylation of a conserved cysteine residue.</text>
</comment>
<comment type="similarity">
    <text evidence="1">Belongs to the radical SAM superfamily. RlmN family.</text>
</comment>
<comment type="sequence caution" evidence="3">
    <conflict type="erroneous initiation">
        <sequence resource="EMBL-CDS" id="ABA06059"/>
    </conflict>
</comment>
<organism>
    <name type="scientific">Nitrobacter winogradskyi (strain ATCC 25391 / DSM 10237 / CIP 104748 / NCIMB 11846 / Nb-255)</name>
    <dbReference type="NCBI Taxonomy" id="323098"/>
    <lineage>
        <taxon>Bacteria</taxon>
        <taxon>Pseudomonadati</taxon>
        <taxon>Pseudomonadota</taxon>
        <taxon>Alphaproteobacteria</taxon>
        <taxon>Hyphomicrobiales</taxon>
        <taxon>Nitrobacteraceae</taxon>
        <taxon>Nitrobacter</taxon>
    </lineage>
</organism>
<dbReference type="EC" id="2.1.1.192" evidence="1"/>
<dbReference type="EMBL" id="CP000115">
    <property type="protein sequence ID" value="ABA06059.1"/>
    <property type="status" value="ALT_INIT"/>
    <property type="molecule type" value="Genomic_DNA"/>
</dbReference>
<dbReference type="RefSeq" id="WP_041345675.1">
    <property type="nucleotide sequence ID" value="NC_007406.1"/>
</dbReference>
<dbReference type="SMR" id="Q3SNT2"/>
<dbReference type="STRING" id="323098.Nwi_2806"/>
<dbReference type="KEGG" id="nwi:Nwi_2806"/>
<dbReference type="eggNOG" id="COG0820">
    <property type="taxonomic scope" value="Bacteria"/>
</dbReference>
<dbReference type="HOGENOM" id="CLU_029101_0_0_5"/>
<dbReference type="OrthoDB" id="9793973at2"/>
<dbReference type="Proteomes" id="UP000002531">
    <property type="component" value="Chromosome"/>
</dbReference>
<dbReference type="GO" id="GO:0005737">
    <property type="term" value="C:cytoplasm"/>
    <property type="evidence" value="ECO:0007669"/>
    <property type="project" value="UniProtKB-SubCell"/>
</dbReference>
<dbReference type="GO" id="GO:0051539">
    <property type="term" value="F:4 iron, 4 sulfur cluster binding"/>
    <property type="evidence" value="ECO:0007669"/>
    <property type="project" value="UniProtKB-UniRule"/>
</dbReference>
<dbReference type="GO" id="GO:0046872">
    <property type="term" value="F:metal ion binding"/>
    <property type="evidence" value="ECO:0007669"/>
    <property type="project" value="UniProtKB-KW"/>
</dbReference>
<dbReference type="GO" id="GO:0070040">
    <property type="term" value="F:rRNA (adenine(2503)-C2-)-methyltransferase activity"/>
    <property type="evidence" value="ECO:0007669"/>
    <property type="project" value="UniProtKB-UniRule"/>
</dbReference>
<dbReference type="GO" id="GO:0019843">
    <property type="term" value="F:rRNA binding"/>
    <property type="evidence" value="ECO:0007669"/>
    <property type="project" value="UniProtKB-UniRule"/>
</dbReference>
<dbReference type="GO" id="GO:0002935">
    <property type="term" value="F:tRNA (adenine(37)-C2)-methyltransferase activity"/>
    <property type="evidence" value="ECO:0007669"/>
    <property type="project" value="UniProtKB-UniRule"/>
</dbReference>
<dbReference type="GO" id="GO:0000049">
    <property type="term" value="F:tRNA binding"/>
    <property type="evidence" value="ECO:0007669"/>
    <property type="project" value="UniProtKB-UniRule"/>
</dbReference>
<dbReference type="GO" id="GO:0070475">
    <property type="term" value="P:rRNA base methylation"/>
    <property type="evidence" value="ECO:0007669"/>
    <property type="project" value="UniProtKB-UniRule"/>
</dbReference>
<dbReference type="GO" id="GO:0030488">
    <property type="term" value="P:tRNA methylation"/>
    <property type="evidence" value="ECO:0007669"/>
    <property type="project" value="UniProtKB-UniRule"/>
</dbReference>
<dbReference type="CDD" id="cd01335">
    <property type="entry name" value="Radical_SAM"/>
    <property type="match status" value="1"/>
</dbReference>
<dbReference type="FunFam" id="3.20.20.70:FF:000008">
    <property type="entry name" value="Dual-specificity RNA methyltransferase RlmN"/>
    <property type="match status" value="1"/>
</dbReference>
<dbReference type="Gene3D" id="1.10.150.530">
    <property type="match status" value="1"/>
</dbReference>
<dbReference type="Gene3D" id="3.20.20.70">
    <property type="entry name" value="Aldolase class I"/>
    <property type="match status" value="1"/>
</dbReference>
<dbReference type="HAMAP" id="MF_01849">
    <property type="entry name" value="RNA_methyltr_RlmN"/>
    <property type="match status" value="1"/>
</dbReference>
<dbReference type="InterPro" id="IPR013785">
    <property type="entry name" value="Aldolase_TIM"/>
</dbReference>
<dbReference type="InterPro" id="IPR006638">
    <property type="entry name" value="Elp3/MiaA/NifB-like_rSAM"/>
</dbReference>
<dbReference type="InterPro" id="IPR040072">
    <property type="entry name" value="Methyltransferase_A"/>
</dbReference>
<dbReference type="InterPro" id="IPR048641">
    <property type="entry name" value="RlmN_N"/>
</dbReference>
<dbReference type="InterPro" id="IPR027492">
    <property type="entry name" value="RNA_MTrfase_RlmN"/>
</dbReference>
<dbReference type="InterPro" id="IPR004383">
    <property type="entry name" value="rRNA_lsu_MTrfase_RlmN/Cfr"/>
</dbReference>
<dbReference type="InterPro" id="IPR007197">
    <property type="entry name" value="rSAM"/>
</dbReference>
<dbReference type="NCBIfam" id="TIGR00048">
    <property type="entry name" value="rRNA_mod_RlmN"/>
    <property type="match status" value="1"/>
</dbReference>
<dbReference type="PANTHER" id="PTHR30544">
    <property type="entry name" value="23S RRNA METHYLTRANSFERASE"/>
    <property type="match status" value="1"/>
</dbReference>
<dbReference type="PANTHER" id="PTHR30544:SF5">
    <property type="entry name" value="RADICAL SAM CORE DOMAIN-CONTAINING PROTEIN"/>
    <property type="match status" value="1"/>
</dbReference>
<dbReference type="Pfam" id="PF04055">
    <property type="entry name" value="Radical_SAM"/>
    <property type="match status" value="1"/>
</dbReference>
<dbReference type="Pfam" id="PF21016">
    <property type="entry name" value="RlmN_N"/>
    <property type="match status" value="1"/>
</dbReference>
<dbReference type="PIRSF" id="PIRSF006004">
    <property type="entry name" value="CHP00048"/>
    <property type="match status" value="1"/>
</dbReference>
<dbReference type="SFLD" id="SFLDF00275">
    <property type="entry name" value="adenosine_C2_methyltransferase"/>
    <property type="match status" value="1"/>
</dbReference>
<dbReference type="SFLD" id="SFLDS00029">
    <property type="entry name" value="Radical_SAM"/>
    <property type="match status" value="1"/>
</dbReference>
<dbReference type="SMART" id="SM00729">
    <property type="entry name" value="Elp3"/>
    <property type="match status" value="1"/>
</dbReference>
<dbReference type="SUPFAM" id="SSF102114">
    <property type="entry name" value="Radical SAM enzymes"/>
    <property type="match status" value="1"/>
</dbReference>
<dbReference type="PROSITE" id="PS51918">
    <property type="entry name" value="RADICAL_SAM"/>
    <property type="match status" value="1"/>
</dbReference>
<protein>
    <recommendedName>
        <fullName evidence="1">Dual-specificity RNA methyltransferase RlmN</fullName>
        <ecNumber evidence="1">2.1.1.192</ecNumber>
    </recommendedName>
    <alternativeName>
        <fullName evidence="1">23S rRNA (adenine(2503)-C(2))-methyltransferase</fullName>
    </alternativeName>
    <alternativeName>
        <fullName evidence="1">23S rRNA m2A2503 methyltransferase</fullName>
    </alternativeName>
    <alternativeName>
        <fullName evidence="1">Ribosomal RNA large subunit methyltransferase N</fullName>
    </alternativeName>
    <alternativeName>
        <fullName evidence="1">tRNA (adenine(37)-C(2))-methyltransferase</fullName>
    </alternativeName>
    <alternativeName>
        <fullName evidence="1">tRNA m2A37 methyltransferase</fullName>
    </alternativeName>
</protein>
<gene>
    <name evidence="1" type="primary">rlmN</name>
    <name type="ordered locus">Nwi_2806</name>
</gene>
<name>RLMN_NITWN</name>
<proteinExistence type="inferred from homology"/>
<feature type="chain" id="PRO_0000350283" description="Dual-specificity RNA methyltransferase RlmN">
    <location>
        <begin position="1"/>
        <end position="397"/>
    </location>
</feature>
<feature type="domain" description="Radical SAM core" evidence="2">
    <location>
        <begin position="126"/>
        <end position="369"/>
    </location>
</feature>
<feature type="active site" description="Proton acceptor" evidence="1">
    <location>
        <position position="120"/>
    </location>
</feature>
<feature type="active site" description="S-methylcysteine intermediate" evidence="1">
    <location>
        <position position="372"/>
    </location>
</feature>
<feature type="binding site" evidence="1">
    <location>
        <position position="140"/>
    </location>
    <ligand>
        <name>[4Fe-4S] cluster</name>
        <dbReference type="ChEBI" id="CHEBI:49883"/>
        <note>4Fe-4S-S-AdoMet</note>
    </ligand>
</feature>
<feature type="binding site" evidence="1">
    <location>
        <position position="144"/>
    </location>
    <ligand>
        <name>[4Fe-4S] cluster</name>
        <dbReference type="ChEBI" id="CHEBI:49883"/>
        <note>4Fe-4S-S-AdoMet</note>
    </ligand>
</feature>
<feature type="binding site" evidence="1">
    <location>
        <position position="147"/>
    </location>
    <ligand>
        <name>[4Fe-4S] cluster</name>
        <dbReference type="ChEBI" id="CHEBI:49883"/>
        <note>4Fe-4S-S-AdoMet</note>
    </ligand>
</feature>
<feature type="binding site" evidence="1">
    <location>
        <begin position="198"/>
        <end position="199"/>
    </location>
    <ligand>
        <name>S-adenosyl-L-methionine</name>
        <dbReference type="ChEBI" id="CHEBI:59789"/>
    </ligand>
</feature>
<feature type="binding site" evidence="1">
    <location>
        <position position="230"/>
    </location>
    <ligand>
        <name>S-adenosyl-L-methionine</name>
        <dbReference type="ChEBI" id="CHEBI:59789"/>
    </ligand>
</feature>
<feature type="binding site" evidence="1">
    <location>
        <begin position="252"/>
        <end position="254"/>
    </location>
    <ligand>
        <name>S-adenosyl-L-methionine</name>
        <dbReference type="ChEBI" id="CHEBI:59789"/>
    </ligand>
</feature>
<feature type="binding site" evidence="1">
    <location>
        <position position="329"/>
    </location>
    <ligand>
        <name>S-adenosyl-L-methionine</name>
        <dbReference type="ChEBI" id="CHEBI:59789"/>
    </ligand>
</feature>
<feature type="disulfide bond" description="(transient)" evidence="1">
    <location>
        <begin position="133"/>
        <end position="372"/>
    </location>
</feature>
<evidence type="ECO:0000255" key="1">
    <source>
        <dbReference type="HAMAP-Rule" id="MF_01849"/>
    </source>
</evidence>
<evidence type="ECO:0000255" key="2">
    <source>
        <dbReference type="PROSITE-ProRule" id="PRU01266"/>
    </source>
</evidence>
<evidence type="ECO:0000305" key="3"/>
<accession>Q3SNT2</accession>
<keyword id="KW-0004">4Fe-4S</keyword>
<keyword id="KW-0963">Cytoplasm</keyword>
<keyword id="KW-1015">Disulfide bond</keyword>
<keyword id="KW-0408">Iron</keyword>
<keyword id="KW-0411">Iron-sulfur</keyword>
<keyword id="KW-0479">Metal-binding</keyword>
<keyword id="KW-0489">Methyltransferase</keyword>
<keyword id="KW-1185">Reference proteome</keyword>
<keyword id="KW-0698">rRNA processing</keyword>
<keyword id="KW-0949">S-adenosyl-L-methionine</keyword>
<keyword id="KW-0808">Transferase</keyword>
<keyword id="KW-0819">tRNA processing</keyword>